<proteinExistence type="inferred from homology"/>
<dbReference type="EC" id="2.1.1.61" evidence="1"/>
<dbReference type="EC" id="1.5.-.-" evidence="1"/>
<dbReference type="EMBL" id="CP000462">
    <property type="protein sequence ID" value="ABK38835.1"/>
    <property type="molecule type" value="Genomic_DNA"/>
</dbReference>
<dbReference type="RefSeq" id="YP_856450.1">
    <property type="nucleotide sequence ID" value="NC_008570.1"/>
</dbReference>
<dbReference type="SMR" id="A0KJJ9"/>
<dbReference type="STRING" id="380703.AHA_1919"/>
<dbReference type="EnsemblBacteria" id="ABK38835">
    <property type="protein sequence ID" value="ABK38835"/>
    <property type="gene ID" value="AHA_1919"/>
</dbReference>
<dbReference type="KEGG" id="aha:AHA_1919"/>
<dbReference type="PATRIC" id="fig|380703.7.peg.1933"/>
<dbReference type="eggNOG" id="COG0665">
    <property type="taxonomic scope" value="Bacteria"/>
</dbReference>
<dbReference type="eggNOG" id="COG4121">
    <property type="taxonomic scope" value="Bacteria"/>
</dbReference>
<dbReference type="HOGENOM" id="CLU_022427_1_0_6"/>
<dbReference type="OrthoDB" id="9786494at2"/>
<dbReference type="Proteomes" id="UP000000756">
    <property type="component" value="Chromosome"/>
</dbReference>
<dbReference type="GO" id="GO:0005737">
    <property type="term" value="C:cytoplasm"/>
    <property type="evidence" value="ECO:0007669"/>
    <property type="project" value="UniProtKB-SubCell"/>
</dbReference>
<dbReference type="GO" id="GO:0050660">
    <property type="term" value="F:flavin adenine dinucleotide binding"/>
    <property type="evidence" value="ECO:0007669"/>
    <property type="project" value="UniProtKB-UniRule"/>
</dbReference>
<dbReference type="GO" id="GO:0016645">
    <property type="term" value="F:oxidoreductase activity, acting on the CH-NH group of donors"/>
    <property type="evidence" value="ECO:0007669"/>
    <property type="project" value="InterPro"/>
</dbReference>
<dbReference type="GO" id="GO:0004808">
    <property type="term" value="F:tRNA (5-methylaminomethyl-2-thiouridylate)(34)-methyltransferase activity"/>
    <property type="evidence" value="ECO:0007669"/>
    <property type="project" value="UniProtKB-EC"/>
</dbReference>
<dbReference type="GO" id="GO:0032259">
    <property type="term" value="P:methylation"/>
    <property type="evidence" value="ECO:0007669"/>
    <property type="project" value="UniProtKB-KW"/>
</dbReference>
<dbReference type="GO" id="GO:0002098">
    <property type="term" value="P:tRNA wobble uridine modification"/>
    <property type="evidence" value="ECO:0007669"/>
    <property type="project" value="TreeGrafter"/>
</dbReference>
<dbReference type="FunFam" id="3.40.50.150:FF:000107">
    <property type="entry name" value="tRNA 5-methylaminomethyl-2-thiouridine biosynthesis bifunctional protein MnmC"/>
    <property type="match status" value="1"/>
</dbReference>
<dbReference type="Gene3D" id="3.30.9.10">
    <property type="entry name" value="D-Amino Acid Oxidase, subunit A, domain 2"/>
    <property type="match status" value="1"/>
</dbReference>
<dbReference type="Gene3D" id="3.50.50.60">
    <property type="entry name" value="FAD/NAD(P)-binding domain"/>
    <property type="match status" value="1"/>
</dbReference>
<dbReference type="Gene3D" id="3.40.50.150">
    <property type="entry name" value="Vaccinia Virus protein VP39"/>
    <property type="match status" value="1"/>
</dbReference>
<dbReference type="HAMAP" id="MF_01102">
    <property type="entry name" value="MnmC"/>
    <property type="match status" value="1"/>
</dbReference>
<dbReference type="InterPro" id="IPR006076">
    <property type="entry name" value="FAD-dep_OxRdtase"/>
</dbReference>
<dbReference type="InterPro" id="IPR036188">
    <property type="entry name" value="FAD/NAD-bd_sf"/>
</dbReference>
<dbReference type="InterPro" id="IPR008471">
    <property type="entry name" value="MnmC-like_methylTransf"/>
</dbReference>
<dbReference type="InterPro" id="IPR029063">
    <property type="entry name" value="SAM-dependent_MTases_sf"/>
</dbReference>
<dbReference type="InterPro" id="IPR023032">
    <property type="entry name" value="tRNA_MAMT_biosynth_bifunc_MnmC"/>
</dbReference>
<dbReference type="InterPro" id="IPR047785">
    <property type="entry name" value="tRNA_MNMC2"/>
</dbReference>
<dbReference type="InterPro" id="IPR017610">
    <property type="entry name" value="tRNA_S-uridine_synth_MnmC_C"/>
</dbReference>
<dbReference type="NCBIfam" id="TIGR03197">
    <property type="entry name" value="MnmC_Cterm"/>
    <property type="match status" value="1"/>
</dbReference>
<dbReference type="NCBIfam" id="NF002481">
    <property type="entry name" value="PRK01747.1-2"/>
    <property type="match status" value="1"/>
</dbReference>
<dbReference type="NCBIfam" id="NF002484">
    <property type="entry name" value="PRK01747.1-5"/>
    <property type="match status" value="1"/>
</dbReference>
<dbReference type="NCBIfam" id="NF033855">
    <property type="entry name" value="tRNA_MNMC2"/>
    <property type="match status" value="1"/>
</dbReference>
<dbReference type="PANTHER" id="PTHR13847">
    <property type="entry name" value="SARCOSINE DEHYDROGENASE-RELATED"/>
    <property type="match status" value="1"/>
</dbReference>
<dbReference type="PANTHER" id="PTHR13847:SF283">
    <property type="entry name" value="TRNA 5-METHYLAMINOMETHYL-2-THIOURIDINE BIOSYNTHESIS BIFUNCTIONAL PROTEIN MNMC"/>
    <property type="match status" value="1"/>
</dbReference>
<dbReference type="Pfam" id="PF01266">
    <property type="entry name" value="DAO"/>
    <property type="match status" value="1"/>
</dbReference>
<dbReference type="Pfam" id="PF05430">
    <property type="entry name" value="Methyltransf_30"/>
    <property type="match status" value="1"/>
</dbReference>
<dbReference type="SUPFAM" id="SSF54373">
    <property type="entry name" value="FAD-linked reductases, C-terminal domain"/>
    <property type="match status" value="1"/>
</dbReference>
<dbReference type="SUPFAM" id="SSF51905">
    <property type="entry name" value="FAD/NAD(P)-binding domain"/>
    <property type="match status" value="1"/>
</dbReference>
<feature type="chain" id="PRO_1000064991" description="tRNA 5-methylaminomethyl-2-thiouridine biosynthesis bifunctional protein MnmC">
    <location>
        <begin position="1"/>
        <end position="665"/>
    </location>
</feature>
<feature type="region of interest" description="tRNA (mnm(5)s(2)U34)-methyltransferase">
    <location>
        <begin position="1"/>
        <end position="243"/>
    </location>
</feature>
<feature type="region of interest" description="FAD-dependent cmnm(5)s(2)U34 oxidoreductase">
    <location>
        <begin position="268"/>
        <end position="665"/>
    </location>
</feature>
<gene>
    <name evidence="1" type="primary">mnmC</name>
    <name type="ordered locus">AHA_1919</name>
</gene>
<protein>
    <recommendedName>
        <fullName evidence="1">tRNA 5-methylaminomethyl-2-thiouridine biosynthesis bifunctional protein MnmC</fullName>
        <shortName evidence="1">tRNA mnm(5)s(2)U biosynthesis bifunctional protein</shortName>
    </recommendedName>
    <domain>
        <recommendedName>
            <fullName evidence="1">tRNA (mnm(5)s(2)U34)-methyltransferase</fullName>
            <ecNumber evidence="1">2.1.1.61</ecNumber>
        </recommendedName>
    </domain>
    <domain>
        <recommendedName>
            <fullName evidence="1">FAD-dependent cmnm(5)s(2)U34 oxidoreductase</fullName>
            <ecNumber evidence="1">1.5.-.-</ecNumber>
        </recommendedName>
    </domain>
</protein>
<accession>A0KJJ9</accession>
<organism>
    <name type="scientific">Aeromonas hydrophila subsp. hydrophila (strain ATCC 7966 / DSM 30187 / BCRC 13018 / CCUG 14551 / JCM 1027 / KCTC 2358 / NCIMB 9240 / NCTC 8049)</name>
    <dbReference type="NCBI Taxonomy" id="380703"/>
    <lineage>
        <taxon>Bacteria</taxon>
        <taxon>Pseudomonadati</taxon>
        <taxon>Pseudomonadota</taxon>
        <taxon>Gammaproteobacteria</taxon>
        <taxon>Aeromonadales</taxon>
        <taxon>Aeromonadaceae</taxon>
        <taxon>Aeromonas</taxon>
    </lineage>
</organism>
<keyword id="KW-0963">Cytoplasm</keyword>
<keyword id="KW-0274">FAD</keyword>
<keyword id="KW-0285">Flavoprotein</keyword>
<keyword id="KW-0489">Methyltransferase</keyword>
<keyword id="KW-0511">Multifunctional enzyme</keyword>
<keyword id="KW-0560">Oxidoreductase</keyword>
<keyword id="KW-1185">Reference proteome</keyword>
<keyword id="KW-0949">S-adenosyl-L-methionine</keyword>
<keyword id="KW-0808">Transferase</keyword>
<keyword id="KW-0819">tRNA processing</keyword>
<reference key="1">
    <citation type="journal article" date="2006" name="J. Bacteriol.">
        <title>Genome sequence of Aeromonas hydrophila ATCC 7966T: jack of all trades.</title>
        <authorList>
            <person name="Seshadri R."/>
            <person name="Joseph S.W."/>
            <person name="Chopra A.K."/>
            <person name="Sha J."/>
            <person name="Shaw J."/>
            <person name="Graf J."/>
            <person name="Haft D.H."/>
            <person name="Wu M."/>
            <person name="Ren Q."/>
            <person name="Rosovitz M.J."/>
            <person name="Madupu R."/>
            <person name="Tallon L."/>
            <person name="Kim M."/>
            <person name="Jin S."/>
            <person name="Vuong H."/>
            <person name="Stine O.C."/>
            <person name="Ali A."/>
            <person name="Horneman A.J."/>
            <person name="Heidelberg J.F."/>
        </authorList>
    </citation>
    <scope>NUCLEOTIDE SEQUENCE [LARGE SCALE GENOMIC DNA]</scope>
    <source>
        <strain>ATCC 7966 / DSM 30187 / BCRC 13018 / CCUG 14551 / JCM 1027 / KCTC 2358 / NCIMB 9240 / NCTC 8049</strain>
    </source>
</reference>
<name>MNMC_AERHH</name>
<evidence type="ECO:0000255" key="1">
    <source>
        <dbReference type="HAMAP-Rule" id="MF_01102"/>
    </source>
</evidence>
<sequence>MSQTSLHHARLDWNEAGTPVSSEFGDVYFSNDNGLSETRYVFLQQNRLPARFSHHDSDIFVIGETGFGTGLNFLATMAAFLEQAPQSGNGARLHFISFEKYPLTREDLRKALAAWPELATFSQPLIEQWPLPVAGCHRLLFAGGRIRLDLWFGDIKEMLPQVPHPADGLVDAWYLDGFSPAKNPEMWTQALFDGLARLARPHATIATFTCAGFVRRGLIAAGFAMQKVKGHGSKREMLAGERAEKQPQQTIAPWYARPAGRAGEVLIIGGGIASAMTALSLVERGRRVTLLCQDGEPATGASGNRQGALYPLLNGEHDVLSRFYSLAFGFARSRLLALAKRHPVAFSLCGVTQLGYDDKSAAKLAKMAQGPFPPELMQVLSEPEAEQVVGLPCGHGGVSYPQGGWLCPADLTRAAIKEAQASGLLEVVFNTEVVAMAEQADGWQVESRDGRRWQAPNLVVAAGHQLPALIPFAELPLYPVRGQVSHVPTSVSLSKLNTVLCYDGYLTPAHHDHHCIGASYGRNQTDLEFRADEQAQNQARLQACLPQQAWPAEVDVSGNQARVGVRSASRDHLPVVGPVASLAKLADHYAGLQGDQQNAAPLPLHPGLYVLGALGSRGLCSAPLCGELLASEICGDPLPLAADLLEALHPARYWVRKLLKGKPLQ</sequence>
<comment type="function">
    <text evidence="1">Catalyzes the last two steps in the biosynthesis of 5-methylaminomethyl-2-thiouridine (mnm(5)s(2)U) at the wobble position (U34) in tRNA. Catalyzes the FAD-dependent demodification of cmnm(5)s(2)U34 to nm(5)s(2)U34, followed by the transfer of a methyl group from S-adenosyl-L-methionine to nm(5)s(2)U34, to form mnm(5)s(2)U34.</text>
</comment>
<comment type="catalytic activity">
    <reaction evidence="1">
        <text>5-aminomethyl-2-thiouridine(34) in tRNA + S-adenosyl-L-methionine = 5-methylaminomethyl-2-thiouridine(34) in tRNA + S-adenosyl-L-homocysteine + H(+)</text>
        <dbReference type="Rhea" id="RHEA:19569"/>
        <dbReference type="Rhea" id="RHEA-COMP:10195"/>
        <dbReference type="Rhea" id="RHEA-COMP:10197"/>
        <dbReference type="ChEBI" id="CHEBI:15378"/>
        <dbReference type="ChEBI" id="CHEBI:57856"/>
        <dbReference type="ChEBI" id="CHEBI:59789"/>
        <dbReference type="ChEBI" id="CHEBI:74454"/>
        <dbReference type="ChEBI" id="CHEBI:74455"/>
        <dbReference type="EC" id="2.1.1.61"/>
    </reaction>
</comment>
<comment type="cofactor">
    <cofactor evidence="1">
        <name>FAD</name>
        <dbReference type="ChEBI" id="CHEBI:57692"/>
    </cofactor>
</comment>
<comment type="subcellular location">
    <subcellularLocation>
        <location evidence="1">Cytoplasm</location>
    </subcellularLocation>
</comment>
<comment type="similarity">
    <text evidence="1">In the N-terminal section; belongs to the methyltransferase superfamily. tRNA (mnm(5)s(2)U34)-methyltransferase family.</text>
</comment>
<comment type="similarity">
    <text evidence="1">In the C-terminal section; belongs to the DAO family.</text>
</comment>